<keyword id="KW-0030">Aminoacyl-tRNA synthetase</keyword>
<keyword id="KW-0067">ATP-binding</keyword>
<keyword id="KW-0175">Coiled coil</keyword>
<keyword id="KW-0963">Cytoplasm</keyword>
<keyword id="KW-0436">Ligase</keyword>
<keyword id="KW-0547">Nucleotide-binding</keyword>
<keyword id="KW-0648">Protein biosynthesis</keyword>
<keyword id="KW-1185">Reference proteome</keyword>
<protein>
    <recommendedName>
        <fullName evidence="1">Valine--tRNA ligase</fullName>
        <ecNumber evidence="1">6.1.1.9</ecNumber>
    </recommendedName>
    <alternativeName>
        <fullName evidence="1">Valyl-tRNA synthetase</fullName>
        <shortName evidence="1">ValRS</shortName>
    </alternativeName>
</protein>
<sequence length="953" mass="108244">MEKTYNPQSIEQALYQRWEEAGYFKPHGDTSKDAYSIMIPPPNVTGSLHMGHAFQDTIMDTLIRAERMKGKNTLWQVGTDHAGIATQMVVERKIAAEEGKTKHDYGRDAFIDKIWEWKAESGGTITKQLRRLGASVDWDRERFTMDDGLSAATQEVFVRLFEEDLIYRGKRLVNWDPKLHTAISDLEVESKDKKGFMWHFRYPLADGVKTADGKDYIVVATTRPETMLGDTGVAVNPEDPRYKDLIGKQIKLPIVGRLIPIVGDEHADMDKGTGCVKITPAHDFNDYEVGKRHSLPMINILTFNADIRDAAEVFDTNGEANDAYNSELPAKYHGMERFAARKAIVAEFDELGLLEEVKDHDLTVPYGDRGGVAIEPMLTDQWYVRTAPLAAPAVKAVEDGQIQFVPKQYENMYFAWMRDVQDWCISRQLWWGHRIPAWYDNYGKVYVGRTEDEVREKNNLASVVVLRQDDDVLDTWFSSALWTFGTQGWPENTDALKTFHPSEVLVSGFDIIFFWVARMIMMTMHFVKDEEGNAQVPFKTVYMTGLIRDENGDKMSKSKGNVLDPIDMIDGIGLEELVEKRCGNMMQPKLAAKIEKQTRKAFEGGIEPYGTDALRFTLAAMASTGRDINWDMKRLEGYRNFCNKLWNASRYVLMNTEEHDCGMAEGAELEFSLADQWITSQFEVAAKEFNAHLDNYRLDMAANTLYEFIWNQFCDWYLELTKPVLWKGTEAQQRATRYTLITVLEKTLRLAHPILPYITESIWQSVKPLVDGVEGETIMTQALPQFNEDNFNADVVADLEWVKAFITSIRNLRAEYDIAPSKGLDVMIKVADEKDAARIQANEIVLTSLAKLDSIKVLAKNEETQACATSLVGKSELMIPMAGLIDKDAELARLDKEVAKTQGEIKRIEGKLNNQGFVAKAPEVVITKEREKLEGYQETLVKLEAQKETIAAL</sequence>
<reference key="1">
    <citation type="journal article" date="2005" name="Science">
        <title>Life at depth: Photobacterium profundum genome sequence and expression analysis.</title>
        <authorList>
            <person name="Vezzi A."/>
            <person name="Campanaro S."/>
            <person name="D'Angelo M."/>
            <person name="Simonato F."/>
            <person name="Vitulo N."/>
            <person name="Lauro F.M."/>
            <person name="Cestaro A."/>
            <person name="Malacrida G."/>
            <person name="Simionati B."/>
            <person name="Cannata N."/>
            <person name="Romualdi C."/>
            <person name="Bartlett D.H."/>
            <person name="Valle G."/>
        </authorList>
    </citation>
    <scope>NUCLEOTIDE SEQUENCE [LARGE SCALE GENOMIC DNA]</scope>
    <source>
        <strain>ATCC BAA-1253 / SS9</strain>
    </source>
</reference>
<name>SYV_PHOPR</name>
<accession>Q6LUW1</accession>
<dbReference type="EC" id="6.1.1.9" evidence="1"/>
<dbReference type="EMBL" id="CR378664">
    <property type="protein sequence ID" value="CAG18914.1"/>
    <property type="status" value="ALT_INIT"/>
    <property type="molecule type" value="Genomic_DNA"/>
</dbReference>
<dbReference type="RefSeq" id="WP_041393870.1">
    <property type="nucleotide sequence ID" value="NC_006370.1"/>
</dbReference>
<dbReference type="SMR" id="Q6LUW1"/>
<dbReference type="STRING" id="298386.PBPRA0483"/>
<dbReference type="KEGG" id="ppr:PBPRA0483"/>
<dbReference type="eggNOG" id="COG0525">
    <property type="taxonomic scope" value="Bacteria"/>
</dbReference>
<dbReference type="HOGENOM" id="CLU_001493_0_2_6"/>
<dbReference type="Proteomes" id="UP000000593">
    <property type="component" value="Chromosome 1"/>
</dbReference>
<dbReference type="GO" id="GO:0005829">
    <property type="term" value="C:cytosol"/>
    <property type="evidence" value="ECO:0007669"/>
    <property type="project" value="TreeGrafter"/>
</dbReference>
<dbReference type="GO" id="GO:0002161">
    <property type="term" value="F:aminoacyl-tRNA deacylase activity"/>
    <property type="evidence" value="ECO:0007669"/>
    <property type="project" value="InterPro"/>
</dbReference>
<dbReference type="GO" id="GO:0005524">
    <property type="term" value="F:ATP binding"/>
    <property type="evidence" value="ECO:0007669"/>
    <property type="project" value="UniProtKB-UniRule"/>
</dbReference>
<dbReference type="GO" id="GO:0004832">
    <property type="term" value="F:valine-tRNA ligase activity"/>
    <property type="evidence" value="ECO:0007669"/>
    <property type="project" value="UniProtKB-UniRule"/>
</dbReference>
<dbReference type="GO" id="GO:0006438">
    <property type="term" value="P:valyl-tRNA aminoacylation"/>
    <property type="evidence" value="ECO:0007669"/>
    <property type="project" value="UniProtKB-UniRule"/>
</dbReference>
<dbReference type="CDD" id="cd07962">
    <property type="entry name" value="Anticodon_Ia_Val"/>
    <property type="match status" value="1"/>
</dbReference>
<dbReference type="CDD" id="cd00817">
    <property type="entry name" value="ValRS_core"/>
    <property type="match status" value="1"/>
</dbReference>
<dbReference type="FunFam" id="1.10.287.380:FF:000001">
    <property type="entry name" value="Valine--tRNA ligase"/>
    <property type="match status" value="1"/>
</dbReference>
<dbReference type="FunFam" id="1.10.730.10:FF:000007">
    <property type="entry name" value="Valine--tRNA ligase"/>
    <property type="match status" value="1"/>
</dbReference>
<dbReference type="FunFam" id="3.40.50.620:FF:000032">
    <property type="entry name" value="Valine--tRNA ligase"/>
    <property type="match status" value="1"/>
</dbReference>
<dbReference type="FunFam" id="3.40.50.620:FF:000146">
    <property type="entry name" value="Valine--tRNA ligase"/>
    <property type="match status" value="1"/>
</dbReference>
<dbReference type="FunFam" id="3.90.740.10:FF:000003">
    <property type="entry name" value="Valine--tRNA ligase"/>
    <property type="match status" value="1"/>
</dbReference>
<dbReference type="FunFam" id="3.90.740.10:FF:000004">
    <property type="entry name" value="Valine--tRNA ligase"/>
    <property type="match status" value="1"/>
</dbReference>
<dbReference type="Gene3D" id="3.40.50.620">
    <property type="entry name" value="HUPs"/>
    <property type="match status" value="2"/>
</dbReference>
<dbReference type="Gene3D" id="1.10.730.10">
    <property type="entry name" value="Isoleucyl-tRNA Synthetase, Domain 1"/>
    <property type="match status" value="1"/>
</dbReference>
<dbReference type="Gene3D" id="1.10.287.380">
    <property type="entry name" value="Valyl-tRNA synthetase, C-terminal domain"/>
    <property type="match status" value="1"/>
</dbReference>
<dbReference type="Gene3D" id="3.90.740.10">
    <property type="entry name" value="Valyl/Leucyl/Isoleucyl-tRNA synthetase, editing domain"/>
    <property type="match status" value="1"/>
</dbReference>
<dbReference type="HAMAP" id="MF_02004">
    <property type="entry name" value="Val_tRNA_synth_type1"/>
    <property type="match status" value="1"/>
</dbReference>
<dbReference type="InterPro" id="IPR001412">
    <property type="entry name" value="aa-tRNA-synth_I_CS"/>
</dbReference>
<dbReference type="InterPro" id="IPR002300">
    <property type="entry name" value="aa-tRNA-synth_Ia"/>
</dbReference>
<dbReference type="InterPro" id="IPR033705">
    <property type="entry name" value="Anticodon_Ia_Val"/>
</dbReference>
<dbReference type="InterPro" id="IPR013155">
    <property type="entry name" value="M/V/L/I-tRNA-synth_anticd-bd"/>
</dbReference>
<dbReference type="InterPro" id="IPR014729">
    <property type="entry name" value="Rossmann-like_a/b/a_fold"/>
</dbReference>
<dbReference type="InterPro" id="IPR010978">
    <property type="entry name" value="tRNA-bd_arm"/>
</dbReference>
<dbReference type="InterPro" id="IPR009080">
    <property type="entry name" value="tRNAsynth_Ia_anticodon-bd"/>
</dbReference>
<dbReference type="InterPro" id="IPR037118">
    <property type="entry name" value="Val-tRNA_synth_C_sf"/>
</dbReference>
<dbReference type="InterPro" id="IPR019499">
    <property type="entry name" value="Val-tRNA_synth_tRNA-bd"/>
</dbReference>
<dbReference type="InterPro" id="IPR009008">
    <property type="entry name" value="Val/Leu/Ile-tRNA-synth_edit"/>
</dbReference>
<dbReference type="InterPro" id="IPR002303">
    <property type="entry name" value="Valyl-tRNA_ligase"/>
</dbReference>
<dbReference type="NCBIfam" id="NF004349">
    <property type="entry name" value="PRK05729.1"/>
    <property type="match status" value="1"/>
</dbReference>
<dbReference type="NCBIfam" id="TIGR00422">
    <property type="entry name" value="valS"/>
    <property type="match status" value="1"/>
</dbReference>
<dbReference type="PANTHER" id="PTHR11946:SF93">
    <property type="entry name" value="VALINE--TRNA LIGASE, CHLOROPLASTIC_MITOCHONDRIAL 2"/>
    <property type="match status" value="1"/>
</dbReference>
<dbReference type="PANTHER" id="PTHR11946">
    <property type="entry name" value="VALYL-TRNA SYNTHETASES"/>
    <property type="match status" value="1"/>
</dbReference>
<dbReference type="Pfam" id="PF08264">
    <property type="entry name" value="Anticodon_1"/>
    <property type="match status" value="1"/>
</dbReference>
<dbReference type="Pfam" id="PF00133">
    <property type="entry name" value="tRNA-synt_1"/>
    <property type="match status" value="1"/>
</dbReference>
<dbReference type="Pfam" id="PF10458">
    <property type="entry name" value="Val_tRNA-synt_C"/>
    <property type="match status" value="1"/>
</dbReference>
<dbReference type="PRINTS" id="PR00986">
    <property type="entry name" value="TRNASYNTHVAL"/>
</dbReference>
<dbReference type="SUPFAM" id="SSF47323">
    <property type="entry name" value="Anticodon-binding domain of a subclass of class I aminoacyl-tRNA synthetases"/>
    <property type="match status" value="1"/>
</dbReference>
<dbReference type="SUPFAM" id="SSF52374">
    <property type="entry name" value="Nucleotidylyl transferase"/>
    <property type="match status" value="1"/>
</dbReference>
<dbReference type="SUPFAM" id="SSF46589">
    <property type="entry name" value="tRNA-binding arm"/>
    <property type="match status" value="1"/>
</dbReference>
<dbReference type="SUPFAM" id="SSF50677">
    <property type="entry name" value="ValRS/IleRS/LeuRS editing domain"/>
    <property type="match status" value="1"/>
</dbReference>
<dbReference type="PROSITE" id="PS00178">
    <property type="entry name" value="AA_TRNA_LIGASE_I"/>
    <property type="match status" value="1"/>
</dbReference>
<comment type="function">
    <text evidence="1">Catalyzes the attachment of valine to tRNA(Val). As ValRS can inadvertently accommodate and process structurally similar amino acids such as threonine, to avoid such errors, it has a 'posttransfer' editing activity that hydrolyzes mischarged Thr-tRNA(Val) in a tRNA-dependent manner.</text>
</comment>
<comment type="catalytic activity">
    <reaction evidence="1">
        <text>tRNA(Val) + L-valine + ATP = L-valyl-tRNA(Val) + AMP + diphosphate</text>
        <dbReference type="Rhea" id="RHEA:10704"/>
        <dbReference type="Rhea" id="RHEA-COMP:9672"/>
        <dbReference type="Rhea" id="RHEA-COMP:9708"/>
        <dbReference type="ChEBI" id="CHEBI:30616"/>
        <dbReference type="ChEBI" id="CHEBI:33019"/>
        <dbReference type="ChEBI" id="CHEBI:57762"/>
        <dbReference type="ChEBI" id="CHEBI:78442"/>
        <dbReference type="ChEBI" id="CHEBI:78537"/>
        <dbReference type="ChEBI" id="CHEBI:456215"/>
        <dbReference type="EC" id="6.1.1.9"/>
    </reaction>
</comment>
<comment type="subunit">
    <text evidence="1">Monomer.</text>
</comment>
<comment type="subcellular location">
    <subcellularLocation>
        <location evidence="1">Cytoplasm</location>
    </subcellularLocation>
</comment>
<comment type="domain">
    <text evidence="1">ValRS has two distinct active sites: one for aminoacylation and one for editing. The misactivated threonine is translocated from the active site to the editing site.</text>
</comment>
<comment type="domain">
    <text evidence="1">The C-terminal coiled-coil domain is crucial for aminoacylation activity.</text>
</comment>
<comment type="similarity">
    <text evidence="1">Belongs to the class-I aminoacyl-tRNA synthetase family. ValS type 1 subfamily.</text>
</comment>
<comment type="sequence caution" evidence="2">
    <conflict type="erroneous initiation">
        <sequence resource="EMBL-CDS" id="CAG18914"/>
    </conflict>
</comment>
<proteinExistence type="inferred from homology"/>
<organism>
    <name type="scientific">Photobacterium profundum (strain SS9)</name>
    <dbReference type="NCBI Taxonomy" id="298386"/>
    <lineage>
        <taxon>Bacteria</taxon>
        <taxon>Pseudomonadati</taxon>
        <taxon>Pseudomonadota</taxon>
        <taxon>Gammaproteobacteria</taxon>
        <taxon>Vibrionales</taxon>
        <taxon>Vibrionaceae</taxon>
        <taxon>Photobacterium</taxon>
    </lineage>
</organism>
<gene>
    <name evidence="1" type="primary">valS</name>
    <name type="ordered locus">PBPRA0483</name>
</gene>
<feature type="chain" id="PRO_0000224527" description="Valine--tRNA ligase">
    <location>
        <begin position="1"/>
        <end position="953"/>
    </location>
</feature>
<feature type="coiled-coil region" evidence="1">
    <location>
        <begin position="884"/>
        <end position="953"/>
    </location>
</feature>
<feature type="short sequence motif" description="'HIGH' region">
    <location>
        <begin position="42"/>
        <end position="52"/>
    </location>
</feature>
<feature type="short sequence motif" description="'KMSKS' region">
    <location>
        <begin position="554"/>
        <end position="558"/>
    </location>
</feature>
<feature type="binding site" evidence="1">
    <location>
        <position position="557"/>
    </location>
    <ligand>
        <name>ATP</name>
        <dbReference type="ChEBI" id="CHEBI:30616"/>
    </ligand>
</feature>
<evidence type="ECO:0000255" key="1">
    <source>
        <dbReference type="HAMAP-Rule" id="MF_02004"/>
    </source>
</evidence>
<evidence type="ECO:0000305" key="2"/>